<feature type="signal peptide" evidence="1">
    <location>
        <begin position="1"/>
        <end position="19"/>
    </location>
</feature>
<feature type="chain" id="PRO_0000461175" description="Uncharacterized protein YNL155C-A">
    <location>
        <begin position="20"/>
        <end position="74"/>
    </location>
</feature>
<feature type="region of interest" description="Disordered" evidence="2">
    <location>
        <begin position="26"/>
        <end position="74"/>
    </location>
</feature>
<feature type="compositionally biased region" description="Basic and acidic residues" evidence="2">
    <location>
        <begin position="32"/>
        <end position="46"/>
    </location>
</feature>
<feature type="compositionally biased region" description="Basic and acidic residues" evidence="2">
    <location>
        <begin position="53"/>
        <end position="64"/>
    </location>
</feature>
<gene>
    <name evidence="4" type="ordered locus">YNL155C-A</name>
</gene>
<organism>
    <name type="scientific">Saccharomyces cerevisiae (strain ATCC 204508 / S288c)</name>
    <name type="common">Baker's yeast</name>
    <dbReference type="NCBI Taxonomy" id="559292"/>
    <lineage>
        <taxon>Eukaryota</taxon>
        <taxon>Fungi</taxon>
        <taxon>Dikarya</taxon>
        <taxon>Ascomycota</taxon>
        <taxon>Saccharomycotina</taxon>
        <taxon>Saccharomycetes</taxon>
        <taxon>Saccharomycetales</taxon>
        <taxon>Saccharomycetaceae</taxon>
        <taxon>Saccharomyces</taxon>
    </lineage>
</organism>
<accession>P9WEJ2</accession>
<accession>A0AAT9JGX2</accession>
<keyword id="KW-1185">Reference proteome</keyword>
<keyword id="KW-0732">Signal</keyword>
<protein>
    <recommendedName>
        <fullName evidence="3">Uncharacterized protein YNL155C-A</fullName>
    </recommendedName>
</protein>
<name>YN155_YEAST</name>
<reference key="1">
    <citation type="journal article" date="1997" name="Nature">
        <title>The nucleotide sequence of Saccharomyces cerevisiae chromosome XIV and its evolutionary implications.</title>
        <authorList>
            <person name="Philippsen P."/>
            <person name="Kleine K."/>
            <person name="Poehlmann R."/>
            <person name="Duesterhoeft A."/>
            <person name="Hamberg K."/>
            <person name="Hegemann J.H."/>
            <person name="Obermaier B."/>
            <person name="Urrestarazu L.A."/>
            <person name="Aert R."/>
            <person name="Albermann K."/>
            <person name="Altmann R."/>
            <person name="Andre B."/>
            <person name="Baladron V."/>
            <person name="Ballesta J.P.G."/>
            <person name="Becam A.-M."/>
            <person name="Beinhauer J.D."/>
            <person name="Boskovic J."/>
            <person name="Buitrago M.J."/>
            <person name="Bussereau F."/>
            <person name="Coster F."/>
            <person name="Crouzet M."/>
            <person name="D'Angelo M."/>
            <person name="Dal Pero F."/>
            <person name="De Antoni A."/>
            <person name="del Rey F."/>
            <person name="Doignon F."/>
            <person name="Domdey H."/>
            <person name="Dubois E."/>
            <person name="Fiedler T.A."/>
            <person name="Fleig U."/>
            <person name="Floeth M."/>
            <person name="Fritz C."/>
            <person name="Gaillardin C."/>
            <person name="Garcia-Cantalejo J.M."/>
            <person name="Glansdorff N."/>
            <person name="Goffeau A."/>
            <person name="Gueldener U."/>
            <person name="Herbert C.J."/>
            <person name="Heumann K."/>
            <person name="Heuss-Neitzel D."/>
            <person name="Hilbert H."/>
            <person name="Hinni K."/>
            <person name="Iraqui Houssaini I."/>
            <person name="Jacquet M."/>
            <person name="Jimenez A."/>
            <person name="Jonniaux J.-L."/>
            <person name="Karpfinger-Hartl L."/>
            <person name="Lanfranchi G."/>
            <person name="Lepingle A."/>
            <person name="Levesque H."/>
            <person name="Lyck R."/>
            <person name="Maftahi M."/>
            <person name="Mallet L."/>
            <person name="Maurer C.T.C."/>
            <person name="Messenguy F."/>
            <person name="Mewes H.-W."/>
            <person name="Moestl D."/>
            <person name="Nasr F."/>
            <person name="Nicaud J.-M."/>
            <person name="Niedenthal R.K."/>
            <person name="Pandolfo D."/>
            <person name="Pierard A."/>
            <person name="Piravandi E."/>
            <person name="Planta R.J."/>
            <person name="Pohl T.M."/>
            <person name="Purnelle B."/>
            <person name="Rebischung C."/>
            <person name="Remacha M.A."/>
            <person name="Revuelta J.L."/>
            <person name="Rinke M."/>
            <person name="Saiz J.E."/>
            <person name="Sartorello F."/>
            <person name="Scherens B."/>
            <person name="Sen-Gupta M."/>
            <person name="Soler-Mira A."/>
            <person name="Urbanus J.H.M."/>
            <person name="Valle G."/>
            <person name="Van Dyck L."/>
            <person name="Verhasselt P."/>
            <person name="Vierendeels F."/>
            <person name="Vissers S."/>
            <person name="Voet M."/>
            <person name="Volckaert G."/>
            <person name="Wach A."/>
            <person name="Wambutt R."/>
            <person name="Wedler H."/>
            <person name="Zollner A."/>
            <person name="Hani J."/>
        </authorList>
    </citation>
    <scope>NUCLEOTIDE SEQUENCE [LARGE SCALE GENOMIC DNA]</scope>
    <source>
        <strain>ATCC 204508 / S288c</strain>
    </source>
</reference>
<reference key="2">
    <citation type="journal article" date="2014" name="G3 (Bethesda)">
        <title>The reference genome sequence of Saccharomyces cerevisiae: Then and now.</title>
        <authorList>
            <person name="Engel S.R."/>
            <person name="Dietrich F.S."/>
            <person name="Fisk D.G."/>
            <person name="Binkley G."/>
            <person name="Balakrishnan R."/>
            <person name="Costanzo M.C."/>
            <person name="Dwight S.S."/>
            <person name="Hitz B.C."/>
            <person name="Karra K."/>
            <person name="Nash R.S."/>
            <person name="Weng S."/>
            <person name="Wong E.D."/>
            <person name="Lloyd P."/>
            <person name="Skrzypek M.S."/>
            <person name="Miyasato S.R."/>
            <person name="Simison M."/>
            <person name="Cherry J.M."/>
        </authorList>
    </citation>
    <scope>GENOME REANNOTATION</scope>
    <source>
        <strain>ATCC 204508 / S288c</strain>
    </source>
</reference>
<reference key="3">
    <citation type="journal article" date="2022" name="Genetics">
        <title>New data and collaborations at the Saccharomyces Genome Database: updated reference genome, alleles, and the Alliance of Genome Resources.</title>
        <authorList>
            <person name="Engel S.R."/>
            <person name="Wong E.D."/>
            <person name="Nash R.S."/>
            <person name="Aleksander S."/>
            <person name="Alexander M."/>
            <person name="Douglass E."/>
            <person name="Karra K."/>
            <person name="Miyasato S.R."/>
            <person name="Simison M."/>
            <person name="Skrzypek M.S."/>
            <person name="Weng S."/>
            <person name="Cherry J.M."/>
        </authorList>
    </citation>
    <scope>GENOME REANNOTATION</scope>
    <source>
        <strain>ATCC 204508 / S288c</strain>
    </source>
</reference>
<reference key="4">
    <citation type="journal article" date="2023" name="PLoS Biol.">
        <title>Biological factors and statistical limitations prevent detection of most noncanonical proteins by mass spectrometry.</title>
        <authorList>
            <person name="Wacholder A."/>
            <person name="Carvunis A.R."/>
        </authorList>
    </citation>
    <scope>IDENTIFICATION BY MASS SPECTROMETRY</scope>
</reference>
<proteinExistence type="evidence at protein level"/>
<dbReference type="EMBL" id="BK006947">
    <property type="protein sequence ID" value="DBA54442.1"/>
    <property type="molecule type" value="Genomic_DNA"/>
</dbReference>
<dbReference type="RefSeq" id="NP_001418071.1">
    <property type="nucleotide sequence ID" value="NM_001431142.1"/>
</dbReference>
<dbReference type="GeneID" id="91000626"/>
<dbReference type="SGD" id="S000350099">
    <property type="gene designation" value="YNL155C-A"/>
</dbReference>
<dbReference type="Proteomes" id="UP000002311">
    <property type="component" value="Chromosome XIV"/>
</dbReference>
<evidence type="ECO:0000255" key="1"/>
<evidence type="ECO:0000256" key="2">
    <source>
        <dbReference type="SAM" id="MobiDB-lite"/>
    </source>
</evidence>
<evidence type="ECO:0000305" key="3"/>
<evidence type="ECO:0000312" key="4">
    <source>
        <dbReference type="SGD" id="S000350099"/>
    </source>
</evidence>
<sequence length="74" mass="8563">MIGLIVVPILFAIKGIVVGVQKVKKKFGKHSNTKDQKEDKDEDKRQSISQRKQHTEWPIEENRIQRRAPNQSAL</sequence>